<comment type="function">
    <text evidence="1">One of the primary rRNA binding proteins, this protein initially binds near the 5'-end of the 23S rRNA. It is important during the early stages of 50S assembly. It makes multiple contacts with different domains of the 23S rRNA in the assembled 50S subunit and ribosome.</text>
</comment>
<comment type="function">
    <text evidence="1">Forms part of the polypeptide exit tunnel.</text>
</comment>
<comment type="subunit">
    <text evidence="1">Part of the 50S ribosomal subunit.</text>
</comment>
<comment type="similarity">
    <text evidence="1">Belongs to the universal ribosomal protein uL4 family.</text>
</comment>
<dbReference type="EMBL" id="CP000029">
    <property type="protein sequence ID" value="AAW55168.1"/>
    <property type="molecule type" value="Genomic_DNA"/>
</dbReference>
<dbReference type="RefSeq" id="WP_001829775.1">
    <property type="nucleotide sequence ID" value="NC_002976.3"/>
</dbReference>
<dbReference type="SMR" id="Q5HM00"/>
<dbReference type="STRING" id="176279.SERP1830"/>
<dbReference type="GeneID" id="50018074"/>
<dbReference type="KEGG" id="ser:SERP1830"/>
<dbReference type="eggNOG" id="COG0088">
    <property type="taxonomic scope" value="Bacteria"/>
</dbReference>
<dbReference type="HOGENOM" id="CLU_041575_5_2_9"/>
<dbReference type="Proteomes" id="UP000000531">
    <property type="component" value="Chromosome"/>
</dbReference>
<dbReference type="GO" id="GO:1990904">
    <property type="term" value="C:ribonucleoprotein complex"/>
    <property type="evidence" value="ECO:0007669"/>
    <property type="project" value="UniProtKB-KW"/>
</dbReference>
<dbReference type="GO" id="GO:0005840">
    <property type="term" value="C:ribosome"/>
    <property type="evidence" value="ECO:0007669"/>
    <property type="project" value="UniProtKB-KW"/>
</dbReference>
<dbReference type="GO" id="GO:0019843">
    <property type="term" value="F:rRNA binding"/>
    <property type="evidence" value="ECO:0007669"/>
    <property type="project" value="UniProtKB-UniRule"/>
</dbReference>
<dbReference type="GO" id="GO:0003735">
    <property type="term" value="F:structural constituent of ribosome"/>
    <property type="evidence" value="ECO:0007669"/>
    <property type="project" value="InterPro"/>
</dbReference>
<dbReference type="GO" id="GO:0006412">
    <property type="term" value="P:translation"/>
    <property type="evidence" value="ECO:0007669"/>
    <property type="project" value="UniProtKB-UniRule"/>
</dbReference>
<dbReference type="FunFam" id="3.40.1370.10:FF:000003">
    <property type="entry name" value="50S ribosomal protein L4"/>
    <property type="match status" value="1"/>
</dbReference>
<dbReference type="Gene3D" id="3.40.1370.10">
    <property type="match status" value="1"/>
</dbReference>
<dbReference type="HAMAP" id="MF_01328_B">
    <property type="entry name" value="Ribosomal_uL4_B"/>
    <property type="match status" value="1"/>
</dbReference>
<dbReference type="InterPro" id="IPR002136">
    <property type="entry name" value="Ribosomal_uL4"/>
</dbReference>
<dbReference type="InterPro" id="IPR013005">
    <property type="entry name" value="Ribosomal_uL4-like"/>
</dbReference>
<dbReference type="InterPro" id="IPR023574">
    <property type="entry name" value="Ribosomal_uL4_dom_sf"/>
</dbReference>
<dbReference type="NCBIfam" id="TIGR03953">
    <property type="entry name" value="rplD_bact"/>
    <property type="match status" value="1"/>
</dbReference>
<dbReference type="PANTHER" id="PTHR10746">
    <property type="entry name" value="50S RIBOSOMAL PROTEIN L4"/>
    <property type="match status" value="1"/>
</dbReference>
<dbReference type="PANTHER" id="PTHR10746:SF6">
    <property type="entry name" value="LARGE RIBOSOMAL SUBUNIT PROTEIN UL4M"/>
    <property type="match status" value="1"/>
</dbReference>
<dbReference type="Pfam" id="PF00573">
    <property type="entry name" value="Ribosomal_L4"/>
    <property type="match status" value="1"/>
</dbReference>
<dbReference type="SUPFAM" id="SSF52166">
    <property type="entry name" value="Ribosomal protein L4"/>
    <property type="match status" value="1"/>
</dbReference>
<evidence type="ECO:0000255" key="1">
    <source>
        <dbReference type="HAMAP-Rule" id="MF_01328"/>
    </source>
</evidence>
<evidence type="ECO:0000256" key="2">
    <source>
        <dbReference type="SAM" id="MobiDB-lite"/>
    </source>
</evidence>
<evidence type="ECO:0000305" key="3"/>
<keyword id="KW-1185">Reference proteome</keyword>
<keyword id="KW-0687">Ribonucleoprotein</keyword>
<keyword id="KW-0689">Ribosomal protein</keyword>
<keyword id="KW-0694">RNA-binding</keyword>
<keyword id="KW-0699">rRNA-binding</keyword>
<name>RL4_STAEQ</name>
<reference key="1">
    <citation type="journal article" date="2005" name="J. Bacteriol.">
        <title>Insights on evolution of virulence and resistance from the complete genome analysis of an early methicillin-resistant Staphylococcus aureus strain and a biofilm-producing methicillin-resistant Staphylococcus epidermidis strain.</title>
        <authorList>
            <person name="Gill S.R."/>
            <person name="Fouts D.E."/>
            <person name="Archer G.L."/>
            <person name="Mongodin E.F."/>
            <person name="DeBoy R.T."/>
            <person name="Ravel J."/>
            <person name="Paulsen I.T."/>
            <person name="Kolonay J.F."/>
            <person name="Brinkac L.M."/>
            <person name="Beanan M.J."/>
            <person name="Dodson R.J."/>
            <person name="Daugherty S.C."/>
            <person name="Madupu R."/>
            <person name="Angiuoli S.V."/>
            <person name="Durkin A.S."/>
            <person name="Haft D.H."/>
            <person name="Vamathevan J.J."/>
            <person name="Khouri H."/>
            <person name="Utterback T.R."/>
            <person name="Lee C."/>
            <person name="Dimitrov G."/>
            <person name="Jiang L."/>
            <person name="Qin H."/>
            <person name="Weidman J."/>
            <person name="Tran K."/>
            <person name="Kang K.H."/>
            <person name="Hance I.R."/>
            <person name="Nelson K.E."/>
            <person name="Fraser C.M."/>
        </authorList>
    </citation>
    <scope>NUCLEOTIDE SEQUENCE [LARGE SCALE GENOMIC DNA]</scope>
    <source>
        <strain>ATCC 35984 / DSM 28319 / BCRC 17069 / CCUG 31568 / BM 3577 / RP62A</strain>
    </source>
</reference>
<protein>
    <recommendedName>
        <fullName evidence="1">Large ribosomal subunit protein uL4</fullName>
    </recommendedName>
    <alternativeName>
        <fullName evidence="3">50S ribosomal protein L4</fullName>
    </alternativeName>
</protein>
<accession>Q5HM00</accession>
<sequence length="207" mass="22627">MANYDVLKVDGSKSGSVELNDAVFAIEPNNSVLFEAINLQRASLRQGTHAVKNRSAVRGGGRKPWRQKGTGRARQGTIRAPQWRGGGVVFGPTPRSYAYKMPKKMRRLALRSALSFKVQENSFTIVDTFGFEAPKTKEFKNVLTTLEQPKKVLVVTENEDVNVELSARNIPGVQVTTAQGLNVLDLTSADSVIITEAAAKKVEEVLA</sequence>
<feature type="chain" id="PRO_0000129281" description="Large ribosomal subunit protein uL4">
    <location>
        <begin position="1"/>
        <end position="207"/>
    </location>
</feature>
<feature type="region of interest" description="Disordered" evidence="2">
    <location>
        <begin position="55"/>
        <end position="75"/>
    </location>
</feature>
<feature type="compositionally biased region" description="Basic residues" evidence="2">
    <location>
        <begin position="60"/>
        <end position="71"/>
    </location>
</feature>
<proteinExistence type="inferred from homology"/>
<gene>
    <name evidence="1" type="primary">rplD</name>
    <name type="ordered locus">SERP1830</name>
</gene>
<organism>
    <name type="scientific">Staphylococcus epidermidis (strain ATCC 35984 / DSM 28319 / BCRC 17069 / CCUG 31568 / BM 3577 / RP62A)</name>
    <dbReference type="NCBI Taxonomy" id="176279"/>
    <lineage>
        <taxon>Bacteria</taxon>
        <taxon>Bacillati</taxon>
        <taxon>Bacillota</taxon>
        <taxon>Bacilli</taxon>
        <taxon>Bacillales</taxon>
        <taxon>Staphylococcaceae</taxon>
        <taxon>Staphylococcus</taxon>
    </lineage>
</organism>